<organism>
    <name type="scientific">Arabidopsis thaliana</name>
    <name type="common">Mouse-ear cress</name>
    <dbReference type="NCBI Taxonomy" id="3702"/>
    <lineage>
        <taxon>Eukaryota</taxon>
        <taxon>Viridiplantae</taxon>
        <taxon>Streptophyta</taxon>
        <taxon>Embryophyta</taxon>
        <taxon>Tracheophyta</taxon>
        <taxon>Spermatophyta</taxon>
        <taxon>Magnoliopsida</taxon>
        <taxon>eudicotyledons</taxon>
        <taxon>Gunneridae</taxon>
        <taxon>Pentapetalae</taxon>
        <taxon>rosids</taxon>
        <taxon>malvids</taxon>
        <taxon>Brassicales</taxon>
        <taxon>Brassicaceae</taxon>
        <taxon>Camelineae</taxon>
        <taxon>Arabidopsis</taxon>
    </lineage>
</organism>
<keyword id="KW-0002">3D-structure</keyword>
<keyword id="KW-0433">Leucine-rich repeat</keyword>
<keyword id="KW-1185">Reference proteome</keyword>
<keyword id="KW-0677">Repeat</keyword>
<dbReference type="EMBL" id="AC004165">
    <property type="protein sequence ID" value="AAC16962.1"/>
    <property type="status" value="ALT_SEQ"/>
    <property type="molecule type" value="Genomic_DNA"/>
</dbReference>
<dbReference type="EMBL" id="CP002685">
    <property type="protein sequence ID" value="AEC08345.2"/>
    <property type="molecule type" value="Genomic_DNA"/>
</dbReference>
<dbReference type="EMBL" id="BX819490">
    <property type="status" value="NOT_ANNOTATED_CDS"/>
    <property type="molecule type" value="mRNA"/>
</dbReference>
<dbReference type="EMBL" id="BX821459">
    <property type="status" value="NOT_ANNOTATED_CDS"/>
    <property type="molecule type" value="mRNA"/>
</dbReference>
<dbReference type="PIR" id="T00588">
    <property type="entry name" value="T00588"/>
</dbReference>
<dbReference type="RefSeq" id="NP_001189636.2">
    <property type="nucleotide sequence ID" value="NM_001202707.2"/>
</dbReference>
<dbReference type="PDB" id="2KD0">
    <property type="method" value="NMR"/>
    <property type="chains" value="A=11-85"/>
</dbReference>
<dbReference type="PDBsum" id="2KD0"/>
<dbReference type="BMRB" id="P0C895"/>
<dbReference type="SMR" id="P0C895"/>
<dbReference type="BioGRID" id="1301786">
    <property type="interactions" value="2"/>
</dbReference>
<dbReference type="FunCoup" id="P0C895">
    <property type="interactions" value="1988"/>
</dbReference>
<dbReference type="STRING" id="3702.P0C895"/>
<dbReference type="iPTMnet" id="P0C895"/>
<dbReference type="PaxDb" id="3702-AT2G30105.1"/>
<dbReference type="ProteomicsDB" id="232413"/>
<dbReference type="EnsemblPlants" id="AT2G30105.1">
    <property type="protein sequence ID" value="AT2G30105.1"/>
    <property type="gene ID" value="AT2G30105"/>
</dbReference>
<dbReference type="GeneID" id="10723124"/>
<dbReference type="Gramene" id="AT2G30105.1">
    <property type="protein sequence ID" value="AT2G30105.1"/>
    <property type="gene ID" value="AT2G30105"/>
</dbReference>
<dbReference type="KEGG" id="ath:AT2G30105"/>
<dbReference type="Araport" id="AT2G30105"/>
<dbReference type="TAIR" id="AT2G30105"/>
<dbReference type="eggNOG" id="KOG0619">
    <property type="taxonomic scope" value="Eukaryota"/>
</dbReference>
<dbReference type="HOGENOM" id="CLU_000288_18_15_1"/>
<dbReference type="InParanoid" id="P0C895"/>
<dbReference type="OMA" id="QFEGWED"/>
<dbReference type="EvolutionaryTrace" id="P0C895"/>
<dbReference type="PRO" id="PR:P0C895"/>
<dbReference type="Proteomes" id="UP000006548">
    <property type="component" value="Chromosome 2"/>
</dbReference>
<dbReference type="ExpressionAtlas" id="P0C895">
    <property type="expression patterns" value="baseline and differential"/>
</dbReference>
<dbReference type="CDD" id="cd17039">
    <property type="entry name" value="Ubl_ubiquitin_like"/>
    <property type="match status" value="1"/>
</dbReference>
<dbReference type="Gene3D" id="3.10.20.90">
    <property type="entry name" value="Phosphatidylinositol 3-kinase Catalytic Subunit, Chain A, domain 1"/>
    <property type="match status" value="1"/>
</dbReference>
<dbReference type="Gene3D" id="3.80.10.10">
    <property type="entry name" value="Ribonuclease Inhibitor"/>
    <property type="match status" value="1"/>
</dbReference>
<dbReference type="InterPro" id="IPR001611">
    <property type="entry name" value="Leu-rich_rpt"/>
</dbReference>
<dbReference type="InterPro" id="IPR003591">
    <property type="entry name" value="Leu-rich_rpt_typical-subtyp"/>
</dbReference>
<dbReference type="InterPro" id="IPR032675">
    <property type="entry name" value="LRR_dom_sf"/>
</dbReference>
<dbReference type="InterPro" id="IPR050216">
    <property type="entry name" value="LRR_domain-containing"/>
</dbReference>
<dbReference type="InterPro" id="IPR055414">
    <property type="entry name" value="LRR_R13L4/SHOC2-like"/>
</dbReference>
<dbReference type="InterPro" id="IPR000626">
    <property type="entry name" value="Ubiquitin-like_dom"/>
</dbReference>
<dbReference type="InterPro" id="IPR029071">
    <property type="entry name" value="Ubiquitin-like_domsf"/>
</dbReference>
<dbReference type="PANTHER" id="PTHR48051">
    <property type="match status" value="1"/>
</dbReference>
<dbReference type="PANTHER" id="PTHR48051:SF1">
    <property type="entry name" value="RAS SUPPRESSOR PROTEIN 1"/>
    <property type="match status" value="1"/>
</dbReference>
<dbReference type="Pfam" id="PF23598">
    <property type="entry name" value="LRR_14"/>
    <property type="match status" value="1"/>
</dbReference>
<dbReference type="Pfam" id="PF00240">
    <property type="entry name" value="ubiquitin"/>
    <property type="match status" value="1"/>
</dbReference>
<dbReference type="SMART" id="SM00364">
    <property type="entry name" value="LRR_BAC"/>
    <property type="match status" value="3"/>
</dbReference>
<dbReference type="SMART" id="SM00369">
    <property type="entry name" value="LRR_TYP"/>
    <property type="match status" value="4"/>
</dbReference>
<dbReference type="SMART" id="SM00213">
    <property type="entry name" value="UBQ"/>
    <property type="match status" value="1"/>
</dbReference>
<dbReference type="SUPFAM" id="SSF52058">
    <property type="entry name" value="L domain-like"/>
    <property type="match status" value="1"/>
</dbReference>
<dbReference type="SUPFAM" id="SSF54236">
    <property type="entry name" value="Ubiquitin-like"/>
    <property type="match status" value="1"/>
</dbReference>
<dbReference type="PROSITE" id="PS51450">
    <property type="entry name" value="LRR"/>
    <property type="match status" value="6"/>
</dbReference>
<dbReference type="PROSITE" id="PS50053">
    <property type="entry name" value="UBIQUITIN_2"/>
    <property type="match status" value="1"/>
</dbReference>
<proteinExistence type="evidence at protein level"/>
<sequence>MELEDPTMADSTIKLTVKFGGKSIPLSVSPDCTVKDLKSQLQPITNVLPRGQKLIFKGKVLVETSTLKQSDVGSGAKLMLMASQGLHQGEGPILKEASIRPISRTVVSDKVDQRKPSVLVDKNRTDRWKATGVIALAQANLKEIPEEVWDCGSGVRVLDISENFIKEVPAKISSFGSMQKLFLQGNGLSDESIQWEGIASLKRLMLLSISHNNLTVLPSAMGSLTSLRQLDVTNNKLTSLPNELGLLTQLEILKANNNRITSLPESIGNCSFLMEVDLSANIISELPETFTKLRNLKTLELNNTGLKTLPSALFKMCLQLSTLGLHNTEITVEFLRQFEGYDDFDERRRTKHQKQLDFRVVGSGQFDEGADKSW</sequence>
<name>Y2010_ARATH</name>
<gene>
    <name type="ordered locus">At2g30105</name>
    <name type="ORF">T27E13.16</name>
</gene>
<accession>P0C895</accession>
<accession>F4IMP8</accession>
<accession>O64736</accession>
<reference key="1">
    <citation type="journal article" date="1999" name="Nature">
        <title>Sequence and analysis of chromosome 2 of the plant Arabidopsis thaliana.</title>
        <authorList>
            <person name="Lin X."/>
            <person name="Kaul S."/>
            <person name="Rounsley S.D."/>
            <person name="Shea T.P."/>
            <person name="Benito M.-I."/>
            <person name="Town C.D."/>
            <person name="Fujii C.Y."/>
            <person name="Mason T.M."/>
            <person name="Bowman C.L."/>
            <person name="Barnstead M.E."/>
            <person name="Feldblyum T.V."/>
            <person name="Buell C.R."/>
            <person name="Ketchum K.A."/>
            <person name="Lee J.J."/>
            <person name="Ronning C.M."/>
            <person name="Koo H.L."/>
            <person name="Moffat K.S."/>
            <person name="Cronin L.A."/>
            <person name="Shen M."/>
            <person name="Pai G."/>
            <person name="Van Aken S."/>
            <person name="Umayam L."/>
            <person name="Tallon L.J."/>
            <person name="Gill J.E."/>
            <person name="Adams M.D."/>
            <person name="Carrera A.J."/>
            <person name="Creasy T.H."/>
            <person name="Goodman H.M."/>
            <person name="Somerville C.R."/>
            <person name="Copenhaver G.P."/>
            <person name="Preuss D."/>
            <person name="Nierman W.C."/>
            <person name="White O."/>
            <person name="Eisen J.A."/>
            <person name="Salzberg S.L."/>
            <person name="Fraser C.M."/>
            <person name="Venter J.C."/>
        </authorList>
    </citation>
    <scope>NUCLEOTIDE SEQUENCE [LARGE SCALE GENOMIC DNA]</scope>
    <source>
        <strain>cv. Columbia</strain>
    </source>
</reference>
<reference key="2">
    <citation type="journal article" date="2017" name="Plant J.">
        <title>Araport11: a complete reannotation of the Arabidopsis thaliana reference genome.</title>
        <authorList>
            <person name="Cheng C.Y."/>
            <person name="Krishnakumar V."/>
            <person name="Chan A.P."/>
            <person name="Thibaud-Nissen F."/>
            <person name="Schobel S."/>
            <person name="Town C.D."/>
        </authorList>
    </citation>
    <scope>GENOME REANNOTATION</scope>
    <source>
        <strain>cv. Columbia</strain>
    </source>
</reference>
<reference key="3">
    <citation type="journal article" date="2004" name="Genome Res.">
        <title>Whole genome sequence comparisons and 'full-length' cDNA sequences: a combined approach to evaluate and improve Arabidopsis genome annotation.</title>
        <authorList>
            <person name="Castelli V."/>
            <person name="Aury J.-M."/>
            <person name="Jaillon O."/>
            <person name="Wincker P."/>
            <person name="Clepet C."/>
            <person name="Menard M."/>
            <person name="Cruaud C."/>
            <person name="Quetier F."/>
            <person name="Scarpelli C."/>
            <person name="Schaechter V."/>
            <person name="Temple G."/>
            <person name="Caboche M."/>
            <person name="Weissenbach J."/>
            <person name="Salanoubat M."/>
        </authorList>
    </citation>
    <scope>NUCLEOTIDE SEQUENCE [LARGE SCALE MRNA]</scope>
    <source>
        <strain>cv. Columbia</strain>
    </source>
</reference>
<reference evidence="3" key="4">
    <citation type="submission" date="2008-12" db="PDB data bank">
        <title>NMR solution structure of O64736 protein from Arabidopsis thaliana.</title>
        <authorList>
            <person name="Swapna G.V.T."/>
            <person name="Shastry R."/>
            <person name="Foote E."/>
            <person name="Ciccosanti C."/>
            <person name="Jiang M."/>
            <person name="Xiao R."/>
            <person name="Nair R."/>
            <person name="Everett J."/>
            <person name="Huang Y."/>
            <person name="Acton T.B."/>
            <person name="Rost B."/>
            <person name="Montelione G.T."/>
        </authorList>
    </citation>
    <scope>STRUCTURE BY NMR OF 11-85</scope>
</reference>
<evidence type="ECO:0000255" key="1">
    <source>
        <dbReference type="PROSITE-ProRule" id="PRU00214"/>
    </source>
</evidence>
<evidence type="ECO:0000305" key="2"/>
<evidence type="ECO:0007744" key="3">
    <source>
        <dbReference type="PDB" id="2KD0"/>
    </source>
</evidence>
<evidence type="ECO:0007829" key="4">
    <source>
        <dbReference type="PDB" id="2KD0"/>
    </source>
</evidence>
<feature type="chain" id="PRO_0000355996" description="LRR repeats and ubiquitin-like domain-containing protein At2g30105">
    <location>
        <begin position="1"/>
        <end position="374"/>
    </location>
</feature>
<feature type="domain" description="Ubiquitin-like" evidence="1">
    <location>
        <begin position="13"/>
        <end position="87"/>
    </location>
</feature>
<feature type="repeat" description="LRR 1">
    <location>
        <begin position="128"/>
        <end position="151"/>
    </location>
</feature>
<feature type="repeat" description="LRR 2">
    <location>
        <begin position="152"/>
        <end position="175"/>
    </location>
</feature>
<feature type="repeat" description="LRR 3">
    <location>
        <begin position="177"/>
        <end position="200"/>
    </location>
</feature>
<feature type="repeat" description="LRR 4">
    <location>
        <begin position="201"/>
        <end position="224"/>
    </location>
</feature>
<feature type="repeat" description="LRR 5">
    <location>
        <begin position="225"/>
        <end position="248"/>
    </location>
</feature>
<feature type="repeat" description="LRR 6">
    <location>
        <begin position="250"/>
        <end position="270"/>
    </location>
</feature>
<feature type="repeat" description="LRR 7">
    <location>
        <begin position="272"/>
        <end position="293"/>
    </location>
</feature>
<feature type="repeat" description="LRR 8">
    <location>
        <begin position="294"/>
        <end position="316"/>
    </location>
</feature>
<feature type="repeat" description="LRR 9">
    <location>
        <begin position="318"/>
        <end position="340"/>
    </location>
</feature>
<feature type="sequence conflict" description="In Ref. 3; BX819490." evidence="2" ref="3">
    <original>R</original>
    <variation>K</variation>
    <location>
        <position position="156"/>
    </location>
</feature>
<feature type="sequence conflict" description="In Ref. 3; BX821459." evidence="2" ref="3">
    <original>N</original>
    <variation>K</variation>
    <location>
        <position position="327"/>
    </location>
</feature>
<feature type="strand" evidence="4">
    <location>
        <begin position="13"/>
        <end position="19"/>
    </location>
</feature>
<feature type="strand" evidence="4">
    <location>
        <begin position="22"/>
        <end position="28"/>
    </location>
</feature>
<feature type="helix" evidence="4">
    <location>
        <begin position="34"/>
        <end position="45"/>
    </location>
</feature>
<feature type="turn" evidence="4">
    <location>
        <begin position="49"/>
        <end position="51"/>
    </location>
</feature>
<feature type="strand" evidence="4">
    <location>
        <begin position="53"/>
        <end position="56"/>
    </location>
</feature>
<feature type="turn" evidence="4">
    <location>
        <begin position="67"/>
        <end position="71"/>
    </location>
</feature>
<feature type="strand" evidence="4">
    <location>
        <begin position="76"/>
        <end position="81"/>
    </location>
</feature>
<protein>
    <recommendedName>
        <fullName>LRR repeats and ubiquitin-like domain-containing protein At2g30105</fullName>
    </recommendedName>
</protein>
<comment type="sequence caution" evidence="2">
    <conflict type="erroneous gene model prediction">
        <sequence resource="EMBL-CDS" id="AAC16962"/>
    </conflict>
    <text>The predicted gene has been split into 2 genes: At2g30100 and At2g30105.</text>
</comment>